<sequence length="119" mass="13574">MPRVKRGVTARARHKKVLDQAKGYRGRRKNVYRIAKQAVMKAGQYAYRDRRQRKRQFRALWIARINAAARELGLTYSTFMNGLKKAAVEVDRKVLADLAVFDKPAFAALAEQARAKLAA</sequence>
<accession>A1K4E4</accession>
<dbReference type="EMBL" id="AM406670">
    <property type="protein sequence ID" value="CAL93699.1"/>
    <property type="molecule type" value="Genomic_DNA"/>
</dbReference>
<dbReference type="RefSeq" id="WP_011764816.1">
    <property type="nucleotide sequence ID" value="NZ_CP016210.1"/>
</dbReference>
<dbReference type="SMR" id="A1K4E4"/>
<dbReference type="STRING" id="62928.azo1082"/>
<dbReference type="KEGG" id="aoa:dqs_1191"/>
<dbReference type="KEGG" id="azo:azo1082"/>
<dbReference type="eggNOG" id="COG0292">
    <property type="taxonomic scope" value="Bacteria"/>
</dbReference>
<dbReference type="HOGENOM" id="CLU_123265_0_1_4"/>
<dbReference type="OrthoDB" id="9808966at2"/>
<dbReference type="Proteomes" id="UP000002588">
    <property type="component" value="Chromosome"/>
</dbReference>
<dbReference type="GO" id="GO:1990904">
    <property type="term" value="C:ribonucleoprotein complex"/>
    <property type="evidence" value="ECO:0007669"/>
    <property type="project" value="UniProtKB-KW"/>
</dbReference>
<dbReference type="GO" id="GO:0005840">
    <property type="term" value="C:ribosome"/>
    <property type="evidence" value="ECO:0007669"/>
    <property type="project" value="UniProtKB-KW"/>
</dbReference>
<dbReference type="GO" id="GO:0019843">
    <property type="term" value="F:rRNA binding"/>
    <property type="evidence" value="ECO:0007669"/>
    <property type="project" value="UniProtKB-UniRule"/>
</dbReference>
<dbReference type="GO" id="GO:0003735">
    <property type="term" value="F:structural constituent of ribosome"/>
    <property type="evidence" value="ECO:0007669"/>
    <property type="project" value="InterPro"/>
</dbReference>
<dbReference type="GO" id="GO:0000027">
    <property type="term" value="P:ribosomal large subunit assembly"/>
    <property type="evidence" value="ECO:0007669"/>
    <property type="project" value="UniProtKB-UniRule"/>
</dbReference>
<dbReference type="GO" id="GO:0006412">
    <property type="term" value="P:translation"/>
    <property type="evidence" value="ECO:0007669"/>
    <property type="project" value="InterPro"/>
</dbReference>
<dbReference type="CDD" id="cd07026">
    <property type="entry name" value="Ribosomal_L20"/>
    <property type="match status" value="1"/>
</dbReference>
<dbReference type="FunFam" id="1.10.1900.20:FF:000001">
    <property type="entry name" value="50S ribosomal protein L20"/>
    <property type="match status" value="1"/>
</dbReference>
<dbReference type="Gene3D" id="6.10.160.10">
    <property type="match status" value="1"/>
</dbReference>
<dbReference type="Gene3D" id="1.10.1900.20">
    <property type="entry name" value="Ribosomal protein L20"/>
    <property type="match status" value="1"/>
</dbReference>
<dbReference type="HAMAP" id="MF_00382">
    <property type="entry name" value="Ribosomal_bL20"/>
    <property type="match status" value="1"/>
</dbReference>
<dbReference type="InterPro" id="IPR005813">
    <property type="entry name" value="Ribosomal_bL20"/>
</dbReference>
<dbReference type="InterPro" id="IPR049946">
    <property type="entry name" value="RIBOSOMAL_L20_CS"/>
</dbReference>
<dbReference type="InterPro" id="IPR035566">
    <property type="entry name" value="Ribosomal_protein_bL20_C"/>
</dbReference>
<dbReference type="NCBIfam" id="TIGR01032">
    <property type="entry name" value="rplT_bact"/>
    <property type="match status" value="1"/>
</dbReference>
<dbReference type="PANTHER" id="PTHR10986">
    <property type="entry name" value="39S RIBOSOMAL PROTEIN L20"/>
    <property type="match status" value="1"/>
</dbReference>
<dbReference type="Pfam" id="PF00453">
    <property type="entry name" value="Ribosomal_L20"/>
    <property type="match status" value="1"/>
</dbReference>
<dbReference type="PRINTS" id="PR00062">
    <property type="entry name" value="RIBOSOMALL20"/>
</dbReference>
<dbReference type="SUPFAM" id="SSF74731">
    <property type="entry name" value="Ribosomal protein L20"/>
    <property type="match status" value="1"/>
</dbReference>
<dbReference type="PROSITE" id="PS00937">
    <property type="entry name" value="RIBOSOMAL_L20"/>
    <property type="match status" value="1"/>
</dbReference>
<proteinExistence type="inferred from homology"/>
<organism>
    <name type="scientific">Azoarcus sp. (strain BH72)</name>
    <dbReference type="NCBI Taxonomy" id="418699"/>
    <lineage>
        <taxon>Bacteria</taxon>
        <taxon>Pseudomonadati</taxon>
        <taxon>Pseudomonadota</taxon>
        <taxon>Betaproteobacteria</taxon>
        <taxon>Rhodocyclales</taxon>
        <taxon>Zoogloeaceae</taxon>
        <taxon>Azoarcus</taxon>
    </lineage>
</organism>
<name>RL20_AZOSB</name>
<keyword id="KW-1185">Reference proteome</keyword>
<keyword id="KW-0687">Ribonucleoprotein</keyword>
<keyword id="KW-0689">Ribosomal protein</keyword>
<keyword id="KW-0694">RNA-binding</keyword>
<keyword id="KW-0699">rRNA-binding</keyword>
<gene>
    <name evidence="1" type="primary">rplT</name>
    <name type="ordered locus">azo1082</name>
</gene>
<protein>
    <recommendedName>
        <fullName evidence="1">Large ribosomal subunit protein bL20</fullName>
    </recommendedName>
    <alternativeName>
        <fullName evidence="2">50S ribosomal protein L20</fullName>
    </alternativeName>
</protein>
<evidence type="ECO:0000255" key="1">
    <source>
        <dbReference type="HAMAP-Rule" id="MF_00382"/>
    </source>
</evidence>
<evidence type="ECO:0000305" key="2"/>
<comment type="function">
    <text evidence="1">Binds directly to 23S ribosomal RNA and is necessary for the in vitro assembly process of the 50S ribosomal subunit. It is not involved in the protein synthesizing functions of that subunit.</text>
</comment>
<comment type="similarity">
    <text evidence="1">Belongs to the bacterial ribosomal protein bL20 family.</text>
</comment>
<reference key="1">
    <citation type="journal article" date="2006" name="Nat. Biotechnol.">
        <title>Complete genome of the mutualistic, N2-fixing grass endophyte Azoarcus sp. strain BH72.</title>
        <authorList>
            <person name="Krause A."/>
            <person name="Ramakumar A."/>
            <person name="Bartels D."/>
            <person name="Battistoni F."/>
            <person name="Bekel T."/>
            <person name="Boch J."/>
            <person name="Boehm M."/>
            <person name="Friedrich F."/>
            <person name="Hurek T."/>
            <person name="Krause L."/>
            <person name="Linke B."/>
            <person name="McHardy A.C."/>
            <person name="Sarkar A."/>
            <person name="Schneiker S."/>
            <person name="Syed A.A."/>
            <person name="Thauer R."/>
            <person name="Vorhoelter F.-J."/>
            <person name="Weidner S."/>
            <person name="Puehler A."/>
            <person name="Reinhold-Hurek B."/>
            <person name="Kaiser O."/>
            <person name="Goesmann A."/>
        </authorList>
    </citation>
    <scope>NUCLEOTIDE SEQUENCE [LARGE SCALE GENOMIC DNA]</scope>
    <source>
        <strain>BH72</strain>
    </source>
</reference>
<feature type="chain" id="PRO_1000048925" description="Large ribosomal subunit protein bL20">
    <location>
        <begin position="1"/>
        <end position="119"/>
    </location>
</feature>